<evidence type="ECO:0000255" key="1">
    <source>
        <dbReference type="HAMAP-Rule" id="MF_00458"/>
    </source>
</evidence>
<sequence>MTIRSPEPEVKIVVEKDPVKTSFEKWAKPGHFSRTLAKGPSTTTWIWNLHADAHDFDSHTNDLEEISRKVFSAHFGQLAIIFIWLSGMYFHGARFSNYEAWLSDPTHIKPSAQVVWPIVGQEILNGDVGGGFQGIQITSGFFQLWRASGITSELQLYSTAIGGLVFAALMLFAGWFHYHKAAPKLAWFQDVESMLNHHLAGLLGLGSLSWAGHQVHVSLPINQLLDAGVDPKEIPLPHEFILNRDLLAELYPSFAKGLTPFFTLNWSEYSDFLTFRGGLNPVTGGLWLTDTAHHHLAIAVLFLVAGHMYRTNWGIGHSFKEILEAHKGPFTGEGHKGLYEILTTSWHAQLALNLAMLGSLTIIVAHHMYAMPPYPYLATDYGTQLSLFTHHMWIGGFLIVGAAAHAAIFMVRDYDPTTQYNNLLDRVLRHRDAIISHLNWVCIFLGFHSFGLYIHNDTMSALGRPQDMFSDTAIQLQPVFAQWIQNTHALAPNFTAPNALASTSLTWGGGDVIAVGSKVALLPIPLGTADFLVHHIHAFTIHVTVLILLKGVLFARSSRLIPDKANLGFRFPCDGPGRGGTCQVSAWDHVFLGLFWMYNSISVVIFHFSWKMQSDVWGTISEQGVVTHITGGNFAQSAITINGWLRDFLWAQASQVIQSYGSSLSAYGLLFLGAHFVWAFSLMFLFSGRGYWQELIESIVWAHNKLKVAPAIQPRALSITQGRAVGVAHYLLGGIATTWAFFLARIIAVG</sequence>
<name>PSAA_MARPO</name>
<reference key="1">
    <citation type="journal article" date="1986" name="Nature">
        <title>Chloroplast gene organization deduced from complete sequence of liverwort Marchantia polymorpha chloroplast DNA.</title>
        <authorList>
            <person name="Ohyama K."/>
            <person name="Fukuzawa H."/>
            <person name="Kohchi T."/>
            <person name="Shirai H."/>
            <person name="Sano T."/>
            <person name="Sano S."/>
            <person name="Umesono K."/>
            <person name="Shiki Y."/>
            <person name="Takeuchi M."/>
            <person name="Chang Z."/>
            <person name="Aota S."/>
            <person name="Inokuchi H."/>
            <person name="Ozeki H."/>
        </authorList>
    </citation>
    <scope>NUCLEOTIDE SEQUENCE [LARGE SCALE GENOMIC DNA]</scope>
</reference>
<reference key="2">
    <citation type="journal article" date="1988" name="J. Mol. Biol.">
        <title>Structure and organization of Marchantia polymorpha chloroplast genome. II. Gene organization of the large single copy region from rps'12 to atpB.</title>
        <authorList>
            <person name="Umesono K."/>
            <person name="Inokuchi H."/>
            <person name="Shiki Y."/>
            <person name="Takeuchi M."/>
            <person name="Chang Z."/>
            <person name="Fukuzawa H."/>
            <person name="Kohchi T."/>
            <person name="Shirai H."/>
            <person name="Ohyama K."/>
            <person name="Ozeki H."/>
        </authorList>
    </citation>
    <scope>NUCLEOTIDE SEQUENCE [GENOMIC DNA]</scope>
</reference>
<accession>P06406</accession>
<dbReference type="EC" id="1.97.1.12" evidence="1"/>
<dbReference type="EMBL" id="X04465">
    <property type="protein sequence ID" value="CAA28085.1"/>
    <property type="molecule type" value="Genomic_DNA"/>
</dbReference>
<dbReference type="PIR" id="A03465">
    <property type="entry name" value="A1LVP7"/>
</dbReference>
<dbReference type="RefSeq" id="NP_039299.1">
    <property type="nucleotide sequence ID" value="NC_001319.1"/>
</dbReference>
<dbReference type="SMR" id="P06406"/>
<dbReference type="GeneID" id="2702548"/>
<dbReference type="GO" id="GO:0009535">
    <property type="term" value="C:chloroplast thylakoid membrane"/>
    <property type="evidence" value="ECO:0007669"/>
    <property type="project" value="UniProtKB-SubCell"/>
</dbReference>
<dbReference type="GO" id="GO:0009522">
    <property type="term" value="C:photosystem I"/>
    <property type="evidence" value="ECO:0007669"/>
    <property type="project" value="UniProtKB-KW"/>
</dbReference>
<dbReference type="GO" id="GO:0051539">
    <property type="term" value="F:4 iron, 4 sulfur cluster binding"/>
    <property type="evidence" value="ECO:0007669"/>
    <property type="project" value="UniProtKB-KW"/>
</dbReference>
<dbReference type="GO" id="GO:0016168">
    <property type="term" value="F:chlorophyll binding"/>
    <property type="evidence" value="ECO:0007669"/>
    <property type="project" value="UniProtKB-KW"/>
</dbReference>
<dbReference type="GO" id="GO:0009055">
    <property type="term" value="F:electron transfer activity"/>
    <property type="evidence" value="ECO:0007669"/>
    <property type="project" value="UniProtKB-UniRule"/>
</dbReference>
<dbReference type="GO" id="GO:0000287">
    <property type="term" value="F:magnesium ion binding"/>
    <property type="evidence" value="ECO:0007669"/>
    <property type="project" value="UniProtKB-UniRule"/>
</dbReference>
<dbReference type="GO" id="GO:0016491">
    <property type="term" value="F:oxidoreductase activity"/>
    <property type="evidence" value="ECO:0007669"/>
    <property type="project" value="UniProtKB-KW"/>
</dbReference>
<dbReference type="GO" id="GO:0015979">
    <property type="term" value="P:photosynthesis"/>
    <property type="evidence" value="ECO:0007669"/>
    <property type="project" value="UniProtKB-UniRule"/>
</dbReference>
<dbReference type="FunFam" id="1.20.1130.10:FF:000001">
    <property type="entry name" value="Photosystem I P700 chlorophyll a apoprotein A2"/>
    <property type="match status" value="1"/>
</dbReference>
<dbReference type="Gene3D" id="1.20.1130.10">
    <property type="entry name" value="Photosystem I PsaA/PsaB"/>
    <property type="match status" value="1"/>
</dbReference>
<dbReference type="HAMAP" id="MF_00458">
    <property type="entry name" value="PSI_PsaA"/>
    <property type="match status" value="1"/>
</dbReference>
<dbReference type="InterPro" id="IPR006243">
    <property type="entry name" value="PSI_PsaA"/>
</dbReference>
<dbReference type="InterPro" id="IPR001280">
    <property type="entry name" value="PSI_PsaA/B"/>
</dbReference>
<dbReference type="InterPro" id="IPR020586">
    <property type="entry name" value="PSI_PsaA/B_CS"/>
</dbReference>
<dbReference type="InterPro" id="IPR036408">
    <property type="entry name" value="PSI_PsaA/B_sf"/>
</dbReference>
<dbReference type="NCBIfam" id="TIGR01335">
    <property type="entry name" value="psaA"/>
    <property type="match status" value="1"/>
</dbReference>
<dbReference type="PANTHER" id="PTHR30128">
    <property type="entry name" value="OUTER MEMBRANE PROTEIN, OMPA-RELATED"/>
    <property type="match status" value="1"/>
</dbReference>
<dbReference type="PANTHER" id="PTHR30128:SF19">
    <property type="entry name" value="PHOTOSYSTEM I P700 CHLOROPHYLL A APOPROTEIN A1-RELATED"/>
    <property type="match status" value="1"/>
</dbReference>
<dbReference type="Pfam" id="PF00223">
    <property type="entry name" value="PsaA_PsaB"/>
    <property type="match status" value="1"/>
</dbReference>
<dbReference type="PIRSF" id="PIRSF002905">
    <property type="entry name" value="PSI_A"/>
    <property type="match status" value="1"/>
</dbReference>
<dbReference type="PRINTS" id="PR00257">
    <property type="entry name" value="PHOTSYSPSAAB"/>
</dbReference>
<dbReference type="SUPFAM" id="SSF81558">
    <property type="entry name" value="Photosystem I subunits PsaA/PsaB"/>
    <property type="match status" value="1"/>
</dbReference>
<dbReference type="PROSITE" id="PS00419">
    <property type="entry name" value="PHOTOSYSTEM_I_PSAAB"/>
    <property type="match status" value="1"/>
</dbReference>
<comment type="function">
    <text>PsaA and PsaB bind P700, the primary electron donor of photosystem I (PSI), as well as the electron acceptors A0, A1 and FX. PSI is a plastocyanin-ferredoxin oxidoreductase, converting photonic excitation into a charge separation, which transfers an electron from the donor P700 chlorophyll pair to the spectroscopically characterized acceptors A0, A1, FX, FA and FB in turn. Oxidized P700 is reduced on the lumenal side of the thylakoid membrane by plastocyanin.</text>
</comment>
<comment type="catalytic activity">
    <reaction evidence="1">
        <text>reduced [plastocyanin] + hnu + oxidized [2Fe-2S]-[ferredoxin] = oxidized [plastocyanin] + reduced [2Fe-2S]-[ferredoxin]</text>
        <dbReference type="Rhea" id="RHEA:30407"/>
        <dbReference type="Rhea" id="RHEA-COMP:10000"/>
        <dbReference type="Rhea" id="RHEA-COMP:10001"/>
        <dbReference type="Rhea" id="RHEA-COMP:10039"/>
        <dbReference type="Rhea" id="RHEA-COMP:10040"/>
        <dbReference type="ChEBI" id="CHEBI:29036"/>
        <dbReference type="ChEBI" id="CHEBI:30212"/>
        <dbReference type="ChEBI" id="CHEBI:33737"/>
        <dbReference type="ChEBI" id="CHEBI:33738"/>
        <dbReference type="ChEBI" id="CHEBI:49552"/>
        <dbReference type="EC" id="1.97.1.12"/>
    </reaction>
</comment>
<comment type="cofactor">
    <text evidence="1">P700 is a chlorophyll a/chlorophyll a' dimer, A0 is one or more chlorophyll a, A1 is one or both phylloquinones and FX is a shared 4Fe-4S iron-sulfur center.</text>
</comment>
<comment type="subunit">
    <text evidence="1">The PsaA/B heterodimer binds the P700 chlorophyll special pair and subsequent electron acceptors. PSI consists of a core antenna complex that captures photons, and an electron transfer chain that converts photonic excitation into a charge separation. The eukaryotic PSI reaction center is composed of at least 11 subunits.</text>
</comment>
<comment type="subcellular location">
    <subcellularLocation>
        <location evidence="1">Plastid</location>
        <location evidence="1">Chloroplast thylakoid membrane</location>
        <topology evidence="1">Multi-pass membrane protein</topology>
    </subcellularLocation>
</comment>
<comment type="similarity">
    <text evidence="1">Belongs to the PsaA/PsaB family.</text>
</comment>
<geneLocation type="chloroplast"/>
<gene>
    <name evidence="1" type="primary">psaA</name>
</gene>
<keyword id="KW-0004">4Fe-4S</keyword>
<keyword id="KW-0148">Chlorophyll</keyword>
<keyword id="KW-0150">Chloroplast</keyword>
<keyword id="KW-0157">Chromophore</keyword>
<keyword id="KW-0249">Electron transport</keyword>
<keyword id="KW-0408">Iron</keyword>
<keyword id="KW-0411">Iron-sulfur</keyword>
<keyword id="KW-0460">Magnesium</keyword>
<keyword id="KW-0472">Membrane</keyword>
<keyword id="KW-0479">Metal-binding</keyword>
<keyword id="KW-0560">Oxidoreductase</keyword>
<keyword id="KW-0602">Photosynthesis</keyword>
<keyword id="KW-0603">Photosystem I</keyword>
<keyword id="KW-0934">Plastid</keyword>
<keyword id="KW-0793">Thylakoid</keyword>
<keyword id="KW-0812">Transmembrane</keyword>
<keyword id="KW-1133">Transmembrane helix</keyword>
<keyword id="KW-0813">Transport</keyword>
<proteinExistence type="inferred from homology"/>
<protein>
    <recommendedName>
        <fullName evidence="1">Photosystem I P700 chlorophyll a apoprotein A1</fullName>
        <ecNumber evidence="1">1.97.1.12</ecNumber>
    </recommendedName>
    <alternativeName>
        <fullName evidence="1">PSI-A</fullName>
    </alternativeName>
    <alternativeName>
        <fullName evidence="1">PsaA</fullName>
    </alternativeName>
</protein>
<organism>
    <name type="scientific">Marchantia polymorpha</name>
    <name type="common">Common liverwort</name>
    <name type="synonym">Marchantia aquatica</name>
    <dbReference type="NCBI Taxonomy" id="3197"/>
    <lineage>
        <taxon>Eukaryota</taxon>
        <taxon>Viridiplantae</taxon>
        <taxon>Streptophyta</taxon>
        <taxon>Embryophyta</taxon>
        <taxon>Marchantiophyta</taxon>
        <taxon>Marchantiopsida</taxon>
        <taxon>Marchantiidae</taxon>
        <taxon>Marchantiales</taxon>
        <taxon>Marchantiaceae</taxon>
        <taxon>Marchantia</taxon>
    </lineage>
</organism>
<feature type="chain" id="PRO_0000088559" description="Photosystem I P700 chlorophyll a apoprotein A1">
    <location>
        <begin position="1"/>
        <end position="750"/>
    </location>
</feature>
<feature type="transmembrane region" description="Helical; Name=I" evidence="1">
    <location>
        <begin position="70"/>
        <end position="93"/>
    </location>
</feature>
<feature type="transmembrane region" description="Helical; Name=II" evidence="1">
    <location>
        <begin position="156"/>
        <end position="179"/>
    </location>
</feature>
<feature type="transmembrane region" description="Helical; Name=III" evidence="1">
    <location>
        <begin position="195"/>
        <end position="219"/>
    </location>
</feature>
<feature type="transmembrane region" description="Helical; Name=IV" evidence="1">
    <location>
        <begin position="291"/>
        <end position="309"/>
    </location>
</feature>
<feature type="transmembrane region" description="Helical; Name=V" evidence="1">
    <location>
        <begin position="346"/>
        <end position="369"/>
    </location>
</feature>
<feature type="transmembrane region" description="Helical; Name=VI" evidence="1">
    <location>
        <begin position="385"/>
        <end position="411"/>
    </location>
</feature>
<feature type="transmembrane region" description="Helical; Name=VII" evidence="1">
    <location>
        <begin position="433"/>
        <end position="455"/>
    </location>
</feature>
<feature type="transmembrane region" description="Helical; Name=VIII" evidence="1">
    <location>
        <begin position="531"/>
        <end position="549"/>
    </location>
</feature>
<feature type="transmembrane region" description="Helical; Name=IX" evidence="1">
    <location>
        <begin position="589"/>
        <end position="610"/>
    </location>
</feature>
<feature type="transmembrane region" description="Helical; Name=X" evidence="1">
    <location>
        <begin position="664"/>
        <end position="686"/>
    </location>
</feature>
<feature type="transmembrane region" description="Helical; Name=XI" evidence="1">
    <location>
        <begin position="724"/>
        <end position="744"/>
    </location>
</feature>
<feature type="binding site" evidence="1">
    <location>
        <position position="573"/>
    </location>
    <ligand>
        <name>[4Fe-4S] cluster</name>
        <dbReference type="ChEBI" id="CHEBI:49883"/>
        <note>ligand shared between dimeric partners</note>
    </ligand>
</feature>
<feature type="binding site" evidence="1">
    <location>
        <position position="582"/>
    </location>
    <ligand>
        <name>[4Fe-4S] cluster</name>
        <dbReference type="ChEBI" id="CHEBI:49883"/>
        <note>ligand shared between dimeric partners</note>
    </ligand>
</feature>
<feature type="binding site" description="axial binding residue" evidence="1">
    <location>
        <position position="675"/>
    </location>
    <ligand>
        <name>chlorophyll a'</name>
        <dbReference type="ChEBI" id="CHEBI:189419"/>
        <label>A1</label>
    </ligand>
    <ligandPart>
        <name>Mg</name>
        <dbReference type="ChEBI" id="CHEBI:25107"/>
    </ligandPart>
</feature>
<feature type="binding site" description="axial binding residue" evidence="1">
    <location>
        <position position="683"/>
    </location>
    <ligand>
        <name>chlorophyll a</name>
        <dbReference type="ChEBI" id="CHEBI:58416"/>
        <label>A3</label>
    </ligand>
    <ligandPart>
        <name>Mg</name>
        <dbReference type="ChEBI" id="CHEBI:25107"/>
    </ligandPart>
</feature>
<feature type="binding site" evidence="1">
    <location>
        <position position="691"/>
    </location>
    <ligand>
        <name>chlorophyll a</name>
        <dbReference type="ChEBI" id="CHEBI:58416"/>
        <label>A3</label>
    </ligand>
</feature>
<feature type="binding site" evidence="1">
    <location>
        <position position="692"/>
    </location>
    <ligand>
        <name>phylloquinone</name>
        <dbReference type="ChEBI" id="CHEBI:18067"/>
        <label>A</label>
    </ligand>
</feature>